<evidence type="ECO:0000250" key="1">
    <source>
        <dbReference type="UniProtKB" id="P12946"/>
    </source>
</evidence>
<evidence type="ECO:0000255" key="2"/>
<evidence type="ECO:0000269" key="3">
    <source>
    </source>
</evidence>
<evidence type="ECO:0000269" key="4">
    <source>
    </source>
</evidence>
<evidence type="ECO:0000269" key="5">
    <source>
    </source>
</evidence>
<evidence type="ECO:0000269" key="6">
    <source>
    </source>
</evidence>
<evidence type="ECO:0000269" key="7">
    <source>
    </source>
</evidence>
<evidence type="ECO:0000269" key="8">
    <source>
    </source>
</evidence>
<evidence type="ECO:0000269" key="9">
    <source>
    </source>
</evidence>
<evidence type="ECO:0000269" key="10">
    <source>
    </source>
</evidence>
<evidence type="ECO:0000269" key="11">
    <source>
    </source>
</evidence>
<evidence type="ECO:0000269" key="12">
    <source>
    </source>
</evidence>
<evidence type="ECO:0000303" key="13">
    <source>
    </source>
</evidence>
<evidence type="ECO:0000303" key="14">
    <source>
    </source>
</evidence>
<evidence type="ECO:0000305" key="15"/>
<evidence type="ECO:0000305" key="16">
    <source>
    </source>
</evidence>
<evidence type="ECO:0000305" key="17">
    <source>
    </source>
</evidence>
<evidence type="ECO:0000305" key="18">
    <source>
    </source>
</evidence>
<evidence type="ECO:0000312" key="19">
    <source>
        <dbReference type="SGD" id="S000000943"/>
    </source>
</evidence>
<proteinExistence type="evidence at protein level"/>
<protein>
    <recommendedName>
        <fullName evidence="13">Heme A synthase COX15</fullName>
        <shortName>HAS</shortName>
        <ecNumber evidence="18">1.17.99.9</ecNumber>
    </recommendedName>
    <alternativeName>
        <fullName evidence="15">Cytochrome c oxidase assembly protein COX15</fullName>
    </alternativeName>
</protein>
<gene>
    <name evidence="14" type="primary">COX15</name>
    <name evidence="19" type="ordered locus">YER141W</name>
</gene>
<keyword id="KW-0350">Heme biosynthesis</keyword>
<keyword id="KW-0408">Iron</keyword>
<keyword id="KW-0472">Membrane</keyword>
<keyword id="KW-0479">Metal-binding</keyword>
<keyword id="KW-0496">Mitochondrion</keyword>
<keyword id="KW-0999">Mitochondrion inner membrane</keyword>
<keyword id="KW-0560">Oxidoreductase</keyword>
<keyword id="KW-1185">Reference proteome</keyword>
<keyword id="KW-0809">Transit peptide</keyword>
<keyword id="KW-0812">Transmembrane</keyword>
<keyword id="KW-1133">Transmembrane helix</keyword>
<organism>
    <name type="scientific">Saccharomyces cerevisiae (strain ATCC 204508 / S288c)</name>
    <name type="common">Baker's yeast</name>
    <dbReference type="NCBI Taxonomy" id="559292"/>
    <lineage>
        <taxon>Eukaryota</taxon>
        <taxon>Fungi</taxon>
        <taxon>Dikarya</taxon>
        <taxon>Ascomycota</taxon>
        <taxon>Saccharomycotina</taxon>
        <taxon>Saccharomycetes</taxon>
        <taxon>Saccharomycetales</taxon>
        <taxon>Saccharomycetaceae</taxon>
        <taxon>Saccharomyces</taxon>
    </lineage>
</organism>
<accession>P40086</accession>
<accession>D3DM48</accession>
<dbReference type="EC" id="1.17.99.9" evidence="18"/>
<dbReference type="EMBL" id="L38643">
    <property type="protein sequence ID" value="AAA57471.1"/>
    <property type="molecule type" value="Genomic_DNA"/>
</dbReference>
<dbReference type="EMBL" id="U18917">
    <property type="protein sequence ID" value="AAB64668.1"/>
    <property type="molecule type" value="Genomic_DNA"/>
</dbReference>
<dbReference type="EMBL" id="BK006939">
    <property type="protein sequence ID" value="DAA07802.1"/>
    <property type="molecule type" value="Genomic_DNA"/>
</dbReference>
<dbReference type="PIR" id="S50644">
    <property type="entry name" value="S50644"/>
</dbReference>
<dbReference type="RefSeq" id="NP_011068.1">
    <property type="nucleotide sequence ID" value="NM_001179031.1"/>
</dbReference>
<dbReference type="SMR" id="P40086"/>
<dbReference type="BioGRID" id="36890">
    <property type="interactions" value="83"/>
</dbReference>
<dbReference type="FunCoup" id="P40086">
    <property type="interactions" value="1074"/>
</dbReference>
<dbReference type="IntAct" id="P40086">
    <property type="interactions" value="14"/>
</dbReference>
<dbReference type="MINT" id="P40086"/>
<dbReference type="STRING" id="4932.YER141W"/>
<dbReference type="iPTMnet" id="P40086"/>
<dbReference type="PaxDb" id="4932-YER141W"/>
<dbReference type="PeptideAtlas" id="P40086"/>
<dbReference type="EnsemblFungi" id="YER141W_mRNA">
    <property type="protein sequence ID" value="YER141W"/>
    <property type="gene ID" value="YER141W"/>
</dbReference>
<dbReference type="GeneID" id="856884"/>
<dbReference type="KEGG" id="sce:YER141W"/>
<dbReference type="AGR" id="SGD:S000000943"/>
<dbReference type="SGD" id="S000000943">
    <property type="gene designation" value="COX15"/>
</dbReference>
<dbReference type="VEuPathDB" id="FungiDB:YER141W"/>
<dbReference type="eggNOG" id="KOG2725">
    <property type="taxonomic scope" value="Eukaryota"/>
</dbReference>
<dbReference type="GeneTree" id="ENSGT00390000002223"/>
<dbReference type="HOGENOM" id="CLU_017627_4_1_1"/>
<dbReference type="InParanoid" id="P40086"/>
<dbReference type="OMA" id="AFVCYSW"/>
<dbReference type="OrthoDB" id="1726137at2759"/>
<dbReference type="BioCyc" id="YEAST:G3O-30302-MONOMER"/>
<dbReference type="BRENDA" id="1.17.99.9">
    <property type="organism ID" value="984"/>
</dbReference>
<dbReference type="Reactome" id="R-SCE-189451">
    <property type="pathway name" value="Heme biosynthesis"/>
</dbReference>
<dbReference type="UniPathway" id="UPA00269">
    <property type="reaction ID" value="UER00713"/>
</dbReference>
<dbReference type="BioGRID-ORCS" id="856884">
    <property type="hits" value="0 hits in 10 CRISPR screens"/>
</dbReference>
<dbReference type="PHI-base" id="PHI:503"/>
<dbReference type="PRO" id="PR:P40086"/>
<dbReference type="Proteomes" id="UP000002311">
    <property type="component" value="Chromosome V"/>
</dbReference>
<dbReference type="RNAct" id="P40086">
    <property type="molecule type" value="protein"/>
</dbReference>
<dbReference type="GO" id="GO:0005743">
    <property type="term" value="C:mitochondrial inner membrane"/>
    <property type="evidence" value="ECO:0000314"/>
    <property type="project" value="SGD"/>
</dbReference>
<dbReference type="GO" id="GO:0005739">
    <property type="term" value="C:mitochondrion"/>
    <property type="evidence" value="ECO:0007005"/>
    <property type="project" value="SGD"/>
</dbReference>
<dbReference type="GO" id="GO:0046872">
    <property type="term" value="F:metal ion binding"/>
    <property type="evidence" value="ECO:0007669"/>
    <property type="project" value="UniProtKB-KW"/>
</dbReference>
<dbReference type="GO" id="GO:0016653">
    <property type="term" value="F:oxidoreductase activity, acting on NAD(P)H, heme protein as acceptor"/>
    <property type="evidence" value="ECO:0000315"/>
    <property type="project" value="SGD"/>
</dbReference>
<dbReference type="GO" id="GO:0006784">
    <property type="term" value="P:heme A biosynthetic process"/>
    <property type="evidence" value="ECO:0000315"/>
    <property type="project" value="SGD"/>
</dbReference>
<dbReference type="HAMAP" id="MF_01665">
    <property type="entry name" value="HemeA_synth_type2"/>
    <property type="match status" value="1"/>
</dbReference>
<dbReference type="InterPro" id="IPR003780">
    <property type="entry name" value="COX15/CtaA_fam"/>
</dbReference>
<dbReference type="InterPro" id="IPR023754">
    <property type="entry name" value="HemeA_Synthase_type2"/>
</dbReference>
<dbReference type="PANTHER" id="PTHR23289">
    <property type="entry name" value="CYTOCHROME C OXIDASE ASSEMBLY PROTEIN COX15"/>
    <property type="match status" value="1"/>
</dbReference>
<dbReference type="PANTHER" id="PTHR23289:SF2">
    <property type="entry name" value="CYTOCHROME C OXIDASE ASSEMBLY PROTEIN COX15 HOMOLOG"/>
    <property type="match status" value="1"/>
</dbReference>
<dbReference type="Pfam" id="PF02628">
    <property type="entry name" value="COX15-CtaA"/>
    <property type="match status" value="1"/>
</dbReference>
<comment type="function">
    <text evidence="3 4 5 6 7 9 10 11 12">Catalyzes the second reaction in the biosynthesis of heme A, a prosthetic group of mitochondrial cytochrome c oxidase (CcO). Heme A is synthesized from heme B by two sequential enzymatic reactions catalyzed by heme O synthase (HOS/COX10) and heme A synthase (HAS/COX15). HAS catalyzes the conversion of heme O to heme A by two successive hydroxylations of the methyl group at C8, in a reaction that involves matrix ferredoxin YAH1 and ferredoxin reductase ARH1. The first hydroxylation forms heme I, the second hydroxylation results in an unstable dihydroxymethyl group, which spontaneously dehydrates, resulting in the formyl group of heme A (PubMed:11248251, PubMed:11788607, PubMed:37348627, PubMed:9228094). May also play a secondary role in CcO assembly. Plays a role in the maturation of COX1, the heme A-containing structural CcO subunit, possibly by interacting with the COX1-containing sub-assembly complexes that form prior to heme A insertion (PubMed:23979592, PubMed:27998984, PubMed:30181213). May also positively regulate the upstream enzymatic reaction, farnesylation of heme B by HOS/COX10 (PubMed:11959116, PubMed:18953022).</text>
</comment>
<comment type="catalytic activity">
    <reaction evidence="18">
        <text>Fe(II)-heme o + 2 A + H2O = Fe(II)-heme a + 2 AH2</text>
        <dbReference type="Rhea" id="RHEA:63388"/>
        <dbReference type="ChEBI" id="CHEBI:13193"/>
        <dbReference type="ChEBI" id="CHEBI:15377"/>
        <dbReference type="ChEBI" id="CHEBI:17499"/>
        <dbReference type="ChEBI" id="CHEBI:60530"/>
        <dbReference type="ChEBI" id="CHEBI:61715"/>
        <dbReference type="EC" id="1.17.99.9"/>
    </reaction>
    <physiologicalReaction direction="left-to-right" evidence="18">
        <dbReference type="Rhea" id="RHEA:63389"/>
    </physiologicalReaction>
</comment>
<comment type="cofactor">
    <cofactor evidence="1 18">
        <name>heme b</name>
        <dbReference type="ChEBI" id="CHEBI:60344"/>
    </cofactor>
</comment>
<comment type="pathway">
    <text>Porphyrin-containing compound metabolism; heme A biosynthesis; heme A from heme O: step 1/1.</text>
</comment>
<comment type="subunit">
    <text evidence="7 8 9 10 11">Forms 200-350 kDa oligomeric complexes independent on heme binding (PubMed:26940873, PubMed:30181213). In addition to form homooligomeric complexes, a portion also associates with the mitochondrial respiratory supercomplexes. Interacts with CcO assembly factors PET117, SHY1, COA3 and COA1, CcO subunit COX13 and cytochrome b-c1 subunit COR1 (PubMed:23979592, PubMed:27998984, PubMed:30181213, PubMed:37348627).</text>
</comment>
<comment type="subcellular location">
    <subcellularLocation>
        <location evidence="3 12">Mitochondrion inner membrane</location>
        <topology evidence="2">Multi-pass membrane protein</topology>
    </subcellularLocation>
</comment>
<comment type="induction">
    <text evidence="6">Positively regulated by intracellular heme B levels via transcriptional activator HAP1.</text>
</comment>
<comment type="domain">
    <text evidence="1 18">The N-half (TM1-TM4) and C-half (TM5-TM8) domains are connected by an intracellular loop. Each domain is formed from four-helix bundles and they align in a pseudo twofold symmetry manner. The N-half domain is the substrate heme O binding domain and the C-half domain is the cofactor heme B binding domain.</text>
</comment>
<comment type="similarity">
    <text evidence="15">Belongs to the COX15/CtaA family. Type 2 subfamily.</text>
</comment>
<feature type="transit peptide" description="Mitochondrion" evidence="2">
    <location>
        <begin position="1"/>
        <end position="33"/>
    </location>
</feature>
<feature type="chain" id="PRO_0000183933" description="Heme A synthase COX15">
    <location>
        <begin position="34"/>
        <end position="486"/>
    </location>
</feature>
<feature type="topological domain" description="Mitochondrial matrix" evidence="16">
    <location>
        <begin position="34"/>
        <end position="85"/>
    </location>
</feature>
<feature type="transmembrane region" description="Helical; Name=1" evidence="2">
    <location>
        <begin position="86"/>
        <end position="106"/>
    </location>
</feature>
<feature type="topological domain" description="Mitochondrial intermembrane" evidence="16">
    <location>
        <begin position="107"/>
        <end position="170"/>
    </location>
</feature>
<feature type="transmembrane region" description="Helical; Name=2" evidence="2">
    <location>
        <begin position="171"/>
        <end position="191"/>
    </location>
</feature>
<feature type="topological domain" description="Mitochondrial matrix" evidence="16">
    <location>
        <begin position="192"/>
        <end position="200"/>
    </location>
</feature>
<feature type="transmembrane region" description="Helical; Name=3" evidence="2">
    <location>
        <begin position="201"/>
        <end position="221"/>
    </location>
</feature>
<feature type="topological domain" description="Mitochondrial intermembrane" evidence="16">
    <location>
        <begin position="222"/>
        <end position="243"/>
    </location>
</feature>
<feature type="transmembrane region" description="Helical; Name=4" evidence="2">
    <location>
        <begin position="244"/>
        <end position="264"/>
    </location>
</feature>
<feature type="topological domain" description="Mitochondrial matrix" evidence="16">
    <location>
        <begin position="265"/>
        <end position="293"/>
    </location>
</feature>
<feature type="transmembrane region" description="Helical; Name=5" evidence="2">
    <location>
        <begin position="294"/>
        <end position="314"/>
    </location>
</feature>
<feature type="topological domain" description="Mitochondrial intermembrane" evidence="16">
    <location>
        <begin position="315"/>
        <end position="364"/>
    </location>
</feature>
<feature type="transmembrane region" description="Helical; Name=6" evidence="2">
    <location>
        <begin position="365"/>
        <end position="387"/>
    </location>
</feature>
<feature type="topological domain" description="Mitochondrial matrix" evidence="16">
    <location>
        <begin position="388"/>
        <end position="402"/>
    </location>
</feature>
<feature type="transmembrane region" description="Helical; Name=7" evidence="2">
    <location>
        <begin position="403"/>
        <end position="423"/>
    </location>
</feature>
<feature type="topological domain" description="Mitochondrial intermembrane" evidence="16">
    <location>
        <position position="424"/>
    </location>
</feature>
<feature type="transmembrane region" description="Helical; Name=8" evidence="2">
    <location>
        <begin position="425"/>
        <end position="445"/>
    </location>
</feature>
<feature type="topological domain" description="Mitochondrial matrix" evidence="3">
    <location>
        <begin position="446"/>
        <end position="486"/>
    </location>
</feature>
<feature type="binding site" description="axial binding residue" evidence="1 17">
    <location>
        <position position="169"/>
    </location>
    <ligand>
        <name>heme o</name>
        <dbReference type="ChEBI" id="CHEBI:24480"/>
    </ligand>
    <ligandPart>
        <name>Fe</name>
        <dbReference type="ChEBI" id="CHEBI:18248"/>
    </ligandPart>
</feature>
<feature type="binding site" description="axial binding residue" evidence="1 17">
    <location>
        <position position="245"/>
    </location>
    <ligand>
        <name>heme o</name>
        <dbReference type="ChEBI" id="CHEBI:24480"/>
    </ligand>
    <ligandPart>
        <name>Fe</name>
        <dbReference type="ChEBI" id="CHEBI:18248"/>
    </ligandPart>
</feature>
<feature type="binding site" description="axial binding residue" evidence="1 17">
    <location>
        <position position="368"/>
    </location>
    <ligand>
        <name>heme b</name>
        <dbReference type="ChEBI" id="CHEBI:60344"/>
    </ligand>
    <ligandPart>
        <name>Fe</name>
        <dbReference type="ChEBI" id="CHEBI:18248"/>
    </ligandPart>
</feature>
<feature type="binding site" description="axial binding residue" evidence="1 17">
    <location>
        <position position="431"/>
    </location>
    <ligand>
        <name>heme b</name>
        <dbReference type="ChEBI" id="CHEBI:60344"/>
    </ligand>
    <ligandPart>
        <name>Fe</name>
        <dbReference type="ChEBI" id="CHEBI:18248"/>
    </ligandPart>
</feature>
<feature type="mutagenesis site" description="Inactive, preventing the hemylation of COX1 and subsequent CcO assembly. Does not affect oligomerization." evidence="11">
    <original>E</original>
    <variation>A</variation>
    <location>
        <position position="166"/>
    </location>
</feature>
<feature type="mutagenesis site" description="Inactive, preventing the hemylation of COX1 and subsequent CcO assembly. Does not affect oligomerization." evidence="11">
    <original>E</original>
    <variation>D</variation>
    <location>
        <position position="166"/>
    </location>
</feature>
<feature type="mutagenesis site" description="Fails to rescue the heme a biosynthetic defect of a cox15delta mutant." evidence="8">
    <original>H</original>
    <variation>A</variation>
    <variation>C</variation>
    <variation>Y</variation>
    <location>
        <position position="169"/>
    </location>
</feature>
<feature type="mutagenesis site" description="Converts to human ortholog residue: No effect." evidence="8">
    <original>T</original>
    <variation>R</variation>
    <location>
        <position position="236"/>
    </location>
</feature>
<feature type="mutagenesis site" description="Mimicks pathogenic substituion found in human patients: Fails to rescue the heme a biosynthetic defect of a cox15delta mutant." evidence="8">
    <original>T</original>
    <variation>W</variation>
    <location>
        <position position="236"/>
    </location>
</feature>
<feature type="mutagenesis site" description="Fails to rescue the heme a biosynthetic defect of a cox15delta mutant." evidence="8">
    <original>H</original>
    <variation>A</variation>
    <variation>C</variation>
    <variation>Y</variation>
    <location>
        <position position="245"/>
    </location>
</feature>
<feature type="mutagenesis site" description="In cox15(L-20); defective in forming oligomers. Disrupts interaction with PET117." evidence="8 9">
    <location>
        <begin position="266"/>
        <end position="285"/>
    </location>
</feature>
<feature type="mutagenesis site" description="No effect." evidence="11">
    <original>Q</original>
    <variation>A</variation>
    <location>
        <position position="365"/>
    </location>
</feature>
<feature type="mutagenesis site" description="Fails to rescue the heme a biosynthetic defect of a cox15delta mutant." evidence="8">
    <original>H</original>
    <variation>A</variation>
    <variation>C</variation>
    <variation>Y</variation>
    <location>
        <position position="368"/>
    </location>
</feature>
<feature type="mutagenesis site" description="Fails to rescue the heme a biosynthetic defect of a cox15delta mutant." evidence="7">
    <original>H</original>
    <variation>M</variation>
    <location>
        <position position="368"/>
    </location>
</feature>
<feature type="mutagenesis site" description="Fails to rescue the heme a biosynthetic defect of a cox15delta mutant." evidence="8">
    <original>H</original>
    <variation>A</variation>
    <variation>C</variation>
    <variation>Y</variation>
    <location>
        <position position="431"/>
    </location>
</feature>
<name>COX15_YEAST</name>
<sequence>MLFRNIEVGRQAAKLLTRTSSRLAWQSIGASRNISTIRQQIRKTQLYNFKKTVSIRPFSLSSPVFKPHVASESNPIESRLKTSKNVAYWLIGTSGLVFGIVVLGGLTRLTESGLSITEWKPVTGTLPPMNQKEWEEEFIKYKESPEFKLLNSHIDLDEFKFIFFMEWIHRLWGRAIGAVFILPAVYFAVSKKTSGHVNKRLFGLAGLLGLQGFVGWWMVKSGLDQEQLDARKSKPTVSQYRLTTHLGTAFFLYMGMLWTGLEILRECKWIKNPVQAISLFKKLDNPAIGPMRKISLALLAVSFLTAMSGGMVAGLDAGWVYNTWPKMGERWFPSSRELMDENFCRREDKKDLWWRNLLENPVTVQLVHRTCAYVAFTSVLAAHMYAIKKKAVIPRNAMTSLHVMMGVVTLQATLGILTILYLVPISLASIHQAGALALLTSSLVFASQLRKPRAPMRNVIITLPHSSKVTSGKILSEASKLASKPL</sequence>
<reference key="1">
    <citation type="journal article" date="1997" name="J. Biol. Chem.">
        <title>COX15 codes for a mitochondrial protein essential for the assembly of yeast cytochrome oxidase.</title>
        <authorList>
            <person name="Glerum D.M."/>
            <person name="Muroff I."/>
            <person name="Jin C."/>
            <person name="Tzagoloff A."/>
        </authorList>
    </citation>
    <scope>NUCLEOTIDE SEQUENCE [GENOMIC DNA]</scope>
    <scope>FUNCTION</scope>
    <scope>SUBCELLULAR LOCATION</scope>
    <source>
        <strain>ATCC 24657 / D273-10B</strain>
    </source>
</reference>
<reference key="2">
    <citation type="journal article" date="1997" name="Nature">
        <title>The nucleotide sequence of Saccharomyces cerevisiae chromosome V.</title>
        <authorList>
            <person name="Dietrich F.S."/>
            <person name="Mulligan J.T."/>
            <person name="Hennessy K.M."/>
            <person name="Yelton M.A."/>
            <person name="Allen E."/>
            <person name="Araujo R."/>
            <person name="Aviles E."/>
            <person name="Berno A."/>
            <person name="Brennan T."/>
            <person name="Carpenter J."/>
            <person name="Chen E."/>
            <person name="Cherry J.M."/>
            <person name="Chung E."/>
            <person name="Duncan M."/>
            <person name="Guzman E."/>
            <person name="Hartzell G."/>
            <person name="Hunicke-Smith S."/>
            <person name="Hyman R.W."/>
            <person name="Kayser A."/>
            <person name="Komp C."/>
            <person name="Lashkari D."/>
            <person name="Lew H."/>
            <person name="Lin D."/>
            <person name="Mosedale D."/>
            <person name="Nakahara K."/>
            <person name="Namath A."/>
            <person name="Norgren R."/>
            <person name="Oefner P."/>
            <person name="Oh C."/>
            <person name="Petel F.X."/>
            <person name="Roberts D."/>
            <person name="Sehl P."/>
            <person name="Schramm S."/>
            <person name="Shogren T."/>
            <person name="Smith V."/>
            <person name="Taylor P."/>
            <person name="Wei Y."/>
            <person name="Botstein D."/>
            <person name="Davis R.W."/>
        </authorList>
    </citation>
    <scope>NUCLEOTIDE SEQUENCE [LARGE SCALE GENOMIC DNA]</scope>
    <source>
        <strain>ATCC 204508 / S288c</strain>
    </source>
</reference>
<reference key="3">
    <citation type="journal article" date="2014" name="G3 (Bethesda)">
        <title>The reference genome sequence of Saccharomyces cerevisiae: Then and now.</title>
        <authorList>
            <person name="Engel S.R."/>
            <person name="Dietrich F.S."/>
            <person name="Fisk D.G."/>
            <person name="Binkley G."/>
            <person name="Balakrishnan R."/>
            <person name="Costanzo M.C."/>
            <person name="Dwight S.S."/>
            <person name="Hitz B.C."/>
            <person name="Karra K."/>
            <person name="Nash R.S."/>
            <person name="Weng S."/>
            <person name="Wong E.D."/>
            <person name="Lloyd P."/>
            <person name="Skrzypek M.S."/>
            <person name="Miyasato S.R."/>
            <person name="Simison M."/>
            <person name="Cherry J.M."/>
        </authorList>
    </citation>
    <scope>GENOME REANNOTATION</scope>
    <source>
        <strain>ATCC 204508 / S288c</strain>
    </source>
</reference>
<reference key="4">
    <citation type="journal article" date="2001" name="FEBS Lett.">
        <title>Involvement of mitochondrial ferredoxin and Cox15p in hydroxylation of heme O.</title>
        <authorList>
            <person name="Barros M.H."/>
            <person name="Carlson C.G."/>
            <person name="Glerum D.M."/>
            <person name="Tzagoloff A."/>
        </authorList>
    </citation>
    <scope>FUNCTION</scope>
    <scope>SUBCELLULAR LOCATION</scope>
    <scope>TOPOLOGY</scope>
</reference>
<reference key="5">
    <citation type="journal article" date="2002" name="FEBS Lett.">
        <title>Regulation of the heme A biosynthetic pathway in Saccharomyces cerevisiae.</title>
        <authorList>
            <person name="Barros M.H."/>
            <person name="Tzagoloff A."/>
        </authorList>
    </citation>
    <scope>FUNCTION</scope>
</reference>
<reference key="6">
    <citation type="journal article" date="2002" name="J. Biol. Chem.">
        <title>Mitochondrial ferredoxin is required for heme A synthesis in Saccharomyces cerevisiae.</title>
        <authorList>
            <person name="Barros M.H."/>
            <person name="Nobrega F.G."/>
            <person name="Tzagoloff A."/>
        </authorList>
    </citation>
    <scope>FUNCTION</scope>
</reference>
<reference key="7">
    <citation type="journal article" date="2009" name="J. Biol. Chem.">
        <title>Regulation of the heme A biosynthetic pathway: differential regulation of heme A synthase and heme O synthase in Saccharomyces cerevisiae.</title>
        <authorList>
            <person name="Wang Z."/>
            <person name="Wang Y."/>
            <person name="Hegg E.L."/>
        </authorList>
    </citation>
    <scope>FUNCTION</scope>
    <scope>INDUCTION BY HEME B</scope>
</reference>
<reference key="8">
    <citation type="journal article" date="2013" name="Mol. Cell. Biol.">
        <title>The heme a synthase Cox15 associates with cytochrome c oxidase assembly intermediates during Cox1 maturation.</title>
        <authorList>
            <person name="Bareth B."/>
            <person name="Dennerlein S."/>
            <person name="Mick D.U."/>
            <person name="Nikolov M."/>
            <person name="Urlaub H."/>
            <person name="Rehling P."/>
        </authorList>
    </citation>
    <scope>FUNCTION</scope>
    <scope>INTERACTION WITH SHY1; COA1 AND COA3</scope>
    <scope>MUTAGENESIS OF HIS-368</scope>
</reference>
<reference key="9">
    <citation type="journal article" date="2016" name="J. Biol. Chem.">
        <title>Analysis of oligomerization properties of heme a synthase provides insights into its function in eukaryotes.</title>
        <authorList>
            <person name="Swenson S."/>
            <person name="Cannon A."/>
            <person name="Harris N.J."/>
            <person name="Taylor N.G."/>
            <person name="Fox J.L."/>
            <person name="Khalimonchuk O."/>
        </authorList>
    </citation>
    <scope>FUNCTION</scope>
    <scope>SUBUNIT</scope>
    <scope>MUTAGENESIS OF HIS-169; THR-236; HIS-245; 266-GLU--ASN-285; HIS-368 AND HIS-431</scope>
</reference>
<reference key="10">
    <citation type="journal article" date="2017" name="J. Biol. Chem.">
        <title>The assembly factor Pet117 couples heme a synthase activity to cytochrome oxidase assembly.</title>
        <authorList>
            <person name="Taylor N.G."/>
            <person name="Swenson S."/>
            <person name="Harris N.J."/>
            <person name="Germany E.M."/>
            <person name="Fox J.L."/>
            <person name="Khalimonchuk O."/>
        </authorList>
    </citation>
    <scope>FUNCTION</scope>
    <scope>INTERACTION WITH PET117</scope>
    <scope>MUTAGENESIS OF 266-GLU--ASN-285</scope>
</reference>
<reference key="11">
    <citation type="journal article" date="2018" name="J. Biol. Chem.">
        <title>Cox15 interacts with the cytochrome bc1 dimer within respiratory supercomplexes as well as in the absence of cytochrome c oxidase.</title>
        <authorList>
            <person name="Herwaldt E.J."/>
            <person name="Rivett E.D."/>
            <person name="White A.J."/>
            <person name="Hegg E.L."/>
        </authorList>
    </citation>
    <scope>FUNCTION</scope>
    <scope>SUBUNIT</scope>
    <scope>INTERACTION WITH COX13 AND COR1</scope>
</reference>
<reference key="12">
    <citation type="journal article" date="2018" name="J. Proteome Res.">
        <title>Enrichment-based proteogenomics identifies microproteins, missing proteins, and novel smORFs in Saccharomyces cerevisiae.</title>
        <authorList>
            <person name="He C."/>
            <person name="Jia C."/>
            <person name="Zhang Y."/>
            <person name="Xu P."/>
        </authorList>
    </citation>
    <scope>IDENTIFICATION BY MASS SPECTROMETRY</scope>
</reference>
<reference key="13">
    <citation type="journal article" date="2023" name="Arch. Biochem. Biophys.">
        <title>Evidence that the catalytic mechanism of heme a synthase involves the formation of a carbocation stabilized by a conserved glutamate.</title>
        <authorList>
            <person name="Rivett E.D."/>
            <person name="Addis H.G."/>
            <person name="Dietz J.V."/>
            <person name="Carroll-Deaton J.A."/>
            <person name="Gupta S."/>
            <person name="Foreman K.L."/>
            <person name="Dang M.A."/>
            <person name="Fox J.L."/>
            <person name="Khalimonchuk O."/>
            <person name="Hegg E.L."/>
        </authorList>
    </citation>
    <scope>FUNCTION</scope>
    <scope>CATALYTIC ACTIVITY</scope>
    <scope>INTERACTION WITH PET117</scope>
    <scope>MUTAGENESIS OF GLU-166 AND GLN-365</scope>
</reference>